<protein>
    <recommendedName>
        <fullName>Nuclear pore complex protein Nup153</fullName>
    </recommendedName>
    <alternativeName>
        <fullName>153 kDa nucleoporin</fullName>
    </alternativeName>
    <alternativeName>
        <fullName>Nucleoporin Nup153</fullName>
    </alternativeName>
</protein>
<proteinExistence type="evidence at protein level"/>
<sequence>MAAAGGGGPGGPGTGGKIRSRRYHLSSGRTPYSKSRQQQQGIISRVTDTVKSIVPGWLQKYFNKQEEEHDRVHSASEVIVNDTEARENNAEHHIYVVDDDDDEEGNSPTDGRVTPEPIINVDEEVPSTSQSAINNTDALTRPSLHRASLNFNIFDSPALNCQPSTSSAFPIGTSGFSLIKEIKDSTSQHDDDNISTTSGFSSRASDKDLAVSKNVSVPPLWSPEVDRSQSLSHNSSMTSKKPTFNLSAFGSLSPSLGNASILNRQLGDSPFYPGKTTYQGAAAVRSSRVRATPYQAPLRRQVKAKPAAHSQQCGVTSSAARRILQSLEKMSSPLADAKRIPSNSSLSHTPEKNVMDIPENPSKRKKVESPFPPVQRLVTPKSISVSANRSLYIKPSLTPSAVSNTNSRRIQPDKHNESRKNNLQTTSQSHSFSYPKFSTPASNGLSSGTGGGKMMREKGSHYSTKPANEELDGPVLPEIPLPLSTAALPSFQFSTLSGSATSPISVTKPANSTTCRLTSSSPSFTFSSPIVKSTESNAQSPGSSVDFTFSVPAAKASSATSDESKVSAVSRAAKTHAAVSSAKNTDDEQLGFCKPAKTLKEGSVLDMLRSPGFSSSPSLLTSASSLNRSTPTLSKTVGNTFSPANVSLGVGSKQAFGLWQCSACFHENMSSDSNCISCSALKPRPTETSKKLPASPPSSNTKSTVPLSSTPGLGDIFKKPAGMWDCDTCLVQNKAEVTKCVACETPKPGTGMKATLLIPSTTKSTNPATNTLAFASCSASIPNEEMFKKPMGSWECTVCHMQNKTEDNTCVGCKAEKPGTVKSVPTAAPSGLLGLLDQFKKPTGSWDCDVCLIQNKPEANKCIACESAKPGTKAELKGTFDTVKNSVSVAPLSSGQLGLLDQFKKSAGSWDCDVCLVENKPEATKCVACETSKPGTKAELKGFGTSTFSSGTAAPTFKFGVQSSDSTAELKSGASTSGFAKSIGNFKFGLASASTTTEETGKKSFTFGSSTTNEVSAGFKFGIAGSAQTKPDTLSQSTTSGFTFGSVSNTVSLAPTATSSGSTGLQVAAVIADSNLATTATLKSAEEKKAEAPTITPFSFGKTDQNKETASTSFVFGKKDEKTDSAPTGSSFAFGLKKDGEESKQFLFGKPEPTKVDGSAASAGFAFGVTNPTEKKDIEQPGKSVFAFGAQTSITDAGASKQPFSFLTNVSSTAASSSTCGVSSSVFGSVTQSSTPATPSNVFGSAISANAPAPSSGVFGNLTPSNAPAASSTLFGNVAPSSTPSGSSGLFGTAAASSTPATSTSLFGSAAKLSAPASSGGVFNSAAPAAPASTASSVFGSVASSTNTSANSANIFGSSGGAATAPGAFVFGQPASTASTVFGNSSESKSTFVFSGQENKPVTSASTSVTPFLFGAVSASTTPAAPGFNFGRTITSNTTGTSSSPFIFGAGASGSASSSITAQANPVPAFGQSSNPSTAPAFGSSTSVPVFPAGNSQQVPAFGSSSAQPPVFGQQATQPSFGSPAAPSAGSGFPFGNNANFNFNSTNSSGGVFTFNANSGSTTQPPPPGYMFNAAAPGFNMGTNGRTTPASTISTRKIKTARRRK</sequence>
<reference key="1">
    <citation type="submission" date="2004-09" db="EMBL/GenBank/DDBJ databases">
        <authorList>
            <consortium name="NIH - Xenopus Gene Collection (XGC) project"/>
        </authorList>
    </citation>
    <scope>NUCLEOTIDE SEQUENCE [LARGE SCALE MRNA]</scope>
    <source>
        <tissue>Oocyte</tissue>
    </source>
</reference>
<reference key="2">
    <citation type="journal article" date="1998" name="J. Cell Biol.">
        <title>Major binding sites for the nuclear import receptor are the internal nucleoporin Nup153 and the adjacent nuclear filament protein Tpr.</title>
        <authorList>
            <person name="Shah S."/>
            <person name="Tugendreich S."/>
            <person name="Forbes D."/>
        </authorList>
    </citation>
    <scope>INTERACTION WITH KPNB1</scope>
    <scope>SUBCELLULAR LOCATION</scope>
    <scope>TISSUE SPECIFICITY</scope>
</reference>
<gene>
    <name type="primary">nup153</name>
</gene>
<evidence type="ECO:0000250" key="1"/>
<evidence type="ECO:0000250" key="2">
    <source>
        <dbReference type="UniProtKB" id="P49790"/>
    </source>
</evidence>
<evidence type="ECO:0000250" key="3">
    <source>
        <dbReference type="UniProtKB" id="P49791"/>
    </source>
</evidence>
<evidence type="ECO:0000255" key="4">
    <source>
        <dbReference type="PROSITE-ProRule" id="PRU00322"/>
    </source>
</evidence>
<evidence type="ECO:0000256" key="5">
    <source>
        <dbReference type="SAM" id="MobiDB-lite"/>
    </source>
</evidence>
<evidence type="ECO:0000269" key="6">
    <source>
    </source>
</evidence>
<evidence type="ECO:0000305" key="7"/>
<comment type="function">
    <text evidence="1">Component of the nuclear pore complex (NPC), a complex required for the trafficking across the nuclear envelope. Functions as a scaffolding element in the nuclear phase of the NPC essential for normal nucleocytoplasmic transport of proteins and mRNAs. May be involved in the retention of unspliced mRNAs in the nucleus. Probably mediates tpr anchoring to the nuclear membrane at NPC. Possible DNA-binding subunit of the nuclear pore complex (NPC) (By similarity).</text>
</comment>
<comment type="cofactor">
    <cofactor evidence="1">
        <name>Zn(2+)</name>
        <dbReference type="ChEBI" id="CHEBI:29105"/>
    </cofactor>
    <text evidence="1">Binds at least 4 zinc ions per subunit.</text>
</comment>
<comment type="subunit">
    <text evidence="6">Interacts (via C-terminal domain) with the nuclear receptor kpnb1; the interaction occurs in a RanGTP-dependent manner. Associates with the Importin alpha/Importin beta receptor.</text>
</comment>
<comment type="subcellular location">
    <subcellularLocation>
        <location evidence="6">Nucleus membrane</location>
    </subcellularLocation>
    <subcellularLocation>
        <location evidence="6">Nucleus</location>
        <location evidence="6">Nuclear pore complex</location>
    </subcellularLocation>
    <text>Localized to the nucleoplasmic side of the nuclear pore complex (NPC) core structure, forming a fibrous structure called the nuclear basket. Colocalizes with tpr at the nuclear pore complex.</text>
</comment>
<comment type="tissue specificity">
    <text evidence="6">Egg (at protein level).</text>
</comment>
<comment type="domain">
    <text evidence="7">Contains FG repeats. FG repeats are interaction sites for karyopherins (importins, exportins) and form probably an affinity gradient, guiding the transport proteins unidirectionally with their cargo through the NPC. FG repeat regions are highly flexible and lack ordered secondary structure. The overall conservation of FG repeats regarding exact sequence, spacing, and repeat unit length is limited.</text>
</comment>
<comment type="similarity">
    <text evidence="7">Belongs to the NUP153 family.</text>
</comment>
<keyword id="KW-0238">DNA-binding</keyword>
<keyword id="KW-0472">Membrane</keyword>
<keyword id="KW-0479">Metal-binding</keyword>
<keyword id="KW-0509">mRNA transport</keyword>
<keyword id="KW-0906">Nuclear pore complex</keyword>
<keyword id="KW-0539">Nucleus</keyword>
<keyword id="KW-0597">Phosphoprotein</keyword>
<keyword id="KW-0653">Protein transport</keyword>
<keyword id="KW-1185">Reference proteome</keyword>
<keyword id="KW-0677">Repeat</keyword>
<keyword id="KW-0811">Translocation</keyword>
<keyword id="KW-0813">Transport</keyword>
<keyword id="KW-0862">Zinc</keyword>
<keyword id="KW-0863">Zinc-finger</keyword>
<feature type="initiator methionine" description="Removed" evidence="1">
    <location>
        <position position="1"/>
    </location>
</feature>
<feature type="chain" id="PRO_0000422141" description="Nuclear pore complex protein Nup153">
    <location>
        <begin position="2"/>
        <end position="1605"/>
    </location>
</feature>
<feature type="repeat" description="1" evidence="2">
    <location>
        <begin position="249"/>
        <end position="250"/>
    </location>
</feature>
<feature type="repeat" description="2" evidence="2">
    <location>
        <begin position="656"/>
        <end position="657"/>
    </location>
</feature>
<feature type="repeat" description="3" evidence="2">
    <location>
        <begin position="943"/>
        <end position="944"/>
    </location>
</feature>
<feature type="repeat" description="4" evidence="2">
    <location>
        <begin position="959"/>
        <end position="960"/>
    </location>
</feature>
<feature type="repeat" description="5" evidence="2">
    <location>
        <begin position="988"/>
        <end position="989"/>
    </location>
</feature>
<feature type="repeat" description="6" evidence="2">
    <location>
        <begin position="1007"/>
        <end position="1008"/>
    </location>
</feature>
<feature type="repeat" description="7" evidence="2">
    <location>
        <begin position="1021"/>
        <end position="1022"/>
    </location>
</feature>
<feature type="repeat" description="8" evidence="2">
    <location>
        <begin position="1044"/>
        <end position="1045"/>
    </location>
</feature>
<feature type="repeat" description="9" evidence="2">
    <location>
        <begin position="1100"/>
        <end position="1101"/>
    </location>
</feature>
<feature type="repeat" description="10" evidence="2">
    <location>
        <begin position="1116"/>
        <end position="1117"/>
    </location>
</feature>
<feature type="repeat" description="11" evidence="2">
    <location>
        <begin position="1134"/>
        <end position="1135"/>
    </location>
</feature>
<feature type="repeat" description="12" evidence="2">
    <location>
        <begin position="1148"/>
        <end position="1149"/>
    </location>
</feature>
<feature type="repeat" description="13" evidence="2">
    <location>
        <begin position="1167"/>
        <end position="1168"/>
    </location>
</feature>
<feature type="repeat" description="14" evidence="2">
    <location>
        <begin position="1188"/>
        <end position="1189"/>
    </location>
</feature>
<feature type="repeat" description="15" evidence="2">
    <location>
        <begin position="1227"/>
        <end position="1228"/>
    </location>
</feature>
<feature type="repeat" description="16" evidence="2">
    <location>
        <begin position="1243"/>
        <end position="1244"/>
    </location>
</feature>
<feature type="repeat" description="17" evidence="2">
    <location>
        <begin position="1259"/>
        <end position="1260"/>
    </location>
</feature>
<feature type="repeat" description="18" evidence="2">
    <location>
        <begin position="1275"/>
        <end position="1276"/>
    </location>
</feature>
<feature type="repeat" description="19" evidence="2">
    <location>
        <begin position="1291"/>
        <end position="1292"/>
    </location>
</feature>
<feature type="repeat" description="20" evidence="2">
    <location>
        <begin position="1307"/>
        <end position="1308"/>
    </location>
</feature>
<feature type="repeat" description="21" evidence="2">
    <location>
        <begin position="1339"/>
        <end position="1340"/>
    </location>
</feature>
<feature type="repeat" description="22" evidence="2">
    <location>
        <begin position="1356"/>
        <end position="1357"/>
    </location>
</feature>
<feature type="repeat" description="23" evidence="2">
    <location>
        <begin position="1371"/>
        <end position="1372"/>
    </location>
</feature>
<feature type="repeat" description="24" evidence="2">
    <location>
        <begin position="1382"/>
        <end position="1383"/>
    </location>
</feature>
<feature type="repeat" description="25" evidence="2">
    <location>
        <begin position="1414"/>
        <end position="1415"/>
    </location>
</feature>
<feature type="repeat" description="26" evidence="2">
    <location>
        <begin position="1430"/>
        <end position="1431"/>
    </location>
</feature>
<feature type="repeat" description="27" evidence="2">
    <location>
        <begin position="1448"/>
        <end position="1449"/>
    </location>
</feature>
<feature type="repeat" description="28" evidence="2">
    <location>
        <begin position="1470"/>
        <end position="1471"/>
    </location>
</feature>
<feature type="repeat" description="29" evidence="2">
    <location>
        <begin position="1482"/>
        <end position="1483"/>
    </location>
</feature>
<feature type="repeat" description="30" evidence="2">
    <location>
        <begin position="1502"/>
        <end position="1503"/>
    </location>
</feature>
<feature type="repeat" description="31" evidence="2">
    <location>
        <begin position="1512"/>
        <end position="1513"/>
    </location>
</feature>
<feature type="repeat" description="32" evidence="2">
    <location>
        <begin position="1521"/>
        <end position="1522"/>
    </location>
</feature>
<feature type="repeat" description="33" evidence="2">
    <location>
        <begin position="1535"/>
        <end position="1536"/>
    </location>
</feature>
<feature type="zinc finger region" description="RanBP2-type 1" evidence="4">
    <location>
        <begin position="655"/>
        <end position="684"/>
    </location>
</feature>
<feature type="zinc finger region" description="RanBP2-type 2" evidence="4">
    <location>
        <begin position="720"/>
        <end position="749"/>
    </location>
</feature>
<feature type="zinc finger region" description="RanBP2-type 3" evidence="4">
    <location>
        <begin position="790"/>
        <end position="819"/>
    </location>
</feature>
<feature type="zinc finger region" description="RanBP2-type 4" evidence="4">
    <location>
        <begin position="842"/>
        <end position="871"/>
    </location>
</feature>
<feature type="zinc finger region" description="RanBP2-type 5" evidence="4">
    <location>
        <begin position="906"/>
        <end position="935"/>
    </location>
</feature>
<feature type="region of interest" description="Disordered" evidence="5">
    <location>
        <begin position="1"/>
        <end position="44"/>
    </location>
</feature>
<feature type="region of interest" description="Disordered" evidence="5">
    <location>
        <begin position="185"/>
        <end position="208"/>
    </location>
</feature>
<feature type="region of interest" description="33 X 2 AA repeats of F-G" evidence="2">
    <location>
        <begin position="249"/>
        <end position="1556"/>
    </location>
</feature>
<feature type="region of interest" description="Disordered" evidence="5">
    <location>
        <begin position="332"/>
        <end position="373"/>
    </location>
</feature>
<feature type="region of interest" description="Disordered" evidence="5">
    <location>
        <begin position="397"/>
        <end position="476"/>
    </location>
</feature>
<feature type="region of interest" description="Disordered" evidence="5">
    <location>
        <begin position="497"/>
        <end position="522"/>
    </location>
</feature>
<feature type="region of interest" description="Disordered" evidence="5">
    <location>
        <begin position="686"/>
        <end position="711"/>
    </location>
</feature>
<feature type="region of interest" description="Disordered" evidence="5">
    <location>
        <begin position="1499"/>
        <end position="1529"/>
    </location>
</feature>
<feature type="region of interest" description="Disordered" evidence="5">
    <location>
        <begin position="1556"/>
        <end position="1605"/>
    </location>
</feature>
<feature type="compositionally biased region" description="Gly residues" evidence="5">
    <location>
        <begin position="1"/>
        <end position="16"/>
    </location>
</feature>
<feature type="compositionally biased region" description="Polar residues" evidence="5">
    <location>
        <begin position="27"/>
        <end position="44"/>
    </location>
</feature>
<feature type="compositionally biased region" description="Polar residues" evidence="5">
    <location>
        <begin position="194"/>
        <end position="203"/>
    </location>
</feature>
<feature type="compositionally biased region" description="Polar residues" evidence="5">
    <location>
        <begin position="397"/>
        <end position="409"/>
    </location>
</feature>
<feature type="compositionally biased region" description="Basic and acidic residues" evidence="5">
    <location>
        <begin position="410"/>
        <end position="420"/>
    </location>
</feature>
<feature type="compositionally biased region" description="Polar residues" evidence="5">
    <location>
        <begin position="421"/>
        <end position="432"/>
    </location>
</feature>
<feature type="compositionally biased region" description="Polar residues" evidence="5">
    <location>
        <begin position="497"/>
        <end position="517"/>
    </location>
</feature>
<feature type="compositionally biased region" description="Polar residues" evidence="5">
    <location>
        <begin position="697"/>
        <end position="711"/>
    </location>
</feature>
<feature type="compositionally biased region" description="Polar residues" evidence="5">
    <location>
        <begin position="1499"/>
        <end position="1518"/>
    </location>
</feature>
<feature type="compositionally biased region" description="Low complexity" evidence="5">
    <location>
        <begin position="1519"/>
        <end position="1529"/>
    </location>
</feature>
<feature type="compositionally biased region" description="Polar residues" evidence="5">
    <location>
        <begin position="1581"/>
        <end position="1595"/>
    </location>
</feature>
<feature type="compositionally biased region" description="Basic residues" evidence="5">
    <location>
        <begin position="1596"/>
        <end position="1605"/>
    </location>
</feature>
<feature type="binding site" evidence="3">
    <location>
        <position position="661"/>
    </location>
    <ligand>
        <name>Zn(2+)</name>
        <dbReference type="ChEBI" id="CHEBI:29105"/>
        <label>1</label>
    </ligand>
</feature>
<feature type="binding site" evidence="3">
    <location>
        <position position="664"/>
    </location>
    <ligand>
        <name>Zn(2+)</name>
        <dbReference type="ChEBI" id="CHEBI:29105"/>
        <label>1</label>
    </ligand>
</feature>
<feature type="binding site" evidence="3">
    <location>
        <position position="675"/>
    </location>
    <ligand>
        <name>Zn(2+)</name>
        <dbReference type="ChEBI" id="CHEBI:29105"/>
        <label>1</label>
    </ligand>
</feature>
<feature type="binding site" evidence="3">
    <location>
        <position position="678"/>
    </location>
    <ligand>
        <name>Zn(2+)</name>
        <dbReference type="ChEBI" id="CHEBI:29105"/>
        <label>1</label>
    </ligand>
</feature>
<feature type="binding site" evidence="3">
    <location>
        <position position="726"/>
    </location>
    <ligand>
        <name>Zn(2+)</name>
        <dbReference type="ChEBI" id="CHEBI:29105"/>
        <label>2</label>
    </ligand>
</feature>
<feature type="binding site" evidence="3">
    <location>
        <position position="729"/>
    </location>
    <ligand>
        <name>Zn(2+)</name>
        <dbReference type="ChEBI" id="CHEBI:29105"/>
        <label>2</label>
    </ligand>
</feature>
<feature type="binding site" evidence="3">
    <location>
        <position position="740"/>
    </location>
    <ligand>
        <name>Zn(2+)</name>
        <dbReference type="ChEBI" id="CHEBI:29105"/>
        <label>2</label>
    </ligand>
</feature>
<feature type="binding site" evidence="3">
    <location>
        <position position="743"/>
    </location>
    <ligand>
        <name>Zn(2+)</name>
        <dbReference type="ChEBI" id="CHEBI:29105"/>
        <label>2</label>
    </ligand>
</feature>
<feature type="binding site" evidence="3">
    <location>
        <position position="796"/>
    </location>
    <ligand>
        <name>Zn(2+)</name>
        <dbReference type="ChEBI" id="CHEBI:29105"/>
        <label>3</label>
    </ligand>
</feature>
<feature type="binding site" evidence="3">
    <location>
        <position position="799"/>
    </location>
    <ligand>
        <name>Zn(2+)</name>
        <dbReference type="ChEBI" id="CHEBI:29105"/>
        <label>3</label>
    </ligand>
</feature>
<feature type="binding site" evidence="3">
    <location>
        <position position="810"/>
    </location>
    <ligand>
        <name>Zn(2+)</name>
        <dbReference type="ChEBI" id="CHEBI:29105"/>
        <label>3</label>
    </ligand>
</feature>
<feature type="binding site" evidence="3">
    <location>
        <position position="813"/>
    </location>
    <ligand>
        <name>Zn(2+)</name>
        <dbReference type="ChEBI" id="CHEBI:29105"/>
        <label>3</label>
    </ligand>
</feature>
<feature type="binding site" evidence="3">
    <location>
        <position position="848"/>
    </location>
    <ligand>
        <name>Zn(2+)</name>
        <dbReference type="ChEBI" id="CHEBI:29105"/>
        <label>4</label>
    </ligand>
</feature>
<feature type="binding site" evidence="3">
    <location>
        <position position="851"/>
    </location>
    <ligand>
        <name>Zn(2+)</name>
        <dbReference type="ChEBI" id="CHEBI:29105"/>
        <label>4</label>
    </ligand>
</feature>
<feature type="binding site" evidence="3">
    <location>
        <position position="862"/>
    </location>
    <ligand>
        <name>Zn(2+)</name>
        <dbReference type="ChEBI" id="CHEBI:29105"/>
        <label>4</label>
    </ligand>
</feature>
<feature type="binding site" evidence="3">
    <location>
        <position position="865"/>
    </location>
    <ligand>
        <name>Zn(2+)</name>
        <dbReference type="ChEBI" id="CHEBI:29105"/>
        <label>4</label>
    </ligand>
</feature>
<accession>Q640Z6</accession>
<dbReference type="EMBL" id="BC082443">
    <property type="protein sequence ID" value="AAH82443.1"/>
    <property type="molecule type" value="mRNA"/>
</dbReference>
<dbReference type="RefSeq" id="NP_001082284.1">
    <property type="nucleotide sequence ID" value="NM_001088815.1"/>
</dbReference>
<dbReference type="SMR" id="Q640Z6"/>
<dbReference type="BioGRID" id="99706">
    <property type="interactions" value="3"/>
</dbReference>
<dbReference type="GeneID" id="398374"/>
<dbReference type="KEGG" id="xla:398374"/>
<dbReference type="AGR" id="Xenbase:XB-GENE-6251581"/>
<dbReference type="CTD" id="398374"/>
<dbReference type="Xenbase" id="XB-GENE-6251581">
    <property type="gene designation" value="nup153.L"/>
</dbReference>
<dbReference type="OrthoDB" id="79830at2759"/>
<dbReference type="Proteomes" id="UP000186698">
    <property type="component" value="Chromosome 6L"/>
</dbReference>
<dbReference type="Bgee" id="398374">
    <property type="expression patterns" value="Expressed in egg cell and 19 other cell types or tissues"/>
</dbReference>
<dbReference type="GO" id="GO:0031965">
    <property type="term" value="C:nuclear membrane"/>
    <property type="evidence" value="ECO:0007669"/>
    <property type="project" value="UniProtKB-SubCell"/>
</dbReference>
<dbReference type="GO" id="GO:0005643">
    <property type="term" value="C:nuclear pore"/>
    <property type="evidence" value="ECO:0000318"/>
    <property type="project" value="GO_Central"/>
</dbReference>
<dbReference type="GO" id="GO:0003677">
    <property type="term" value="F:DNA binding"/>
    <property type="evidence" value="ECO:0007669"/>
    <property type="project" value="UniProtKB-KW"/>
</dbReference>
<dbReference type="GO" id="GO:0008139">
    <property type="term" value="F:nuclear localization sequence binding"/>
    <property type="evidence" value="ECO:0000318"/>
    <property type="project" value="GO_Central"/>
</dbReference>
<dbReference type="GO" id="GO:0017056">
    <property type="term" value="F:structural constituent of nuclear pore"/>
    <property type="evidence" value="ECO:0000318"/>
    <property type="project" value="GO_Central"/>
</dbReference>
<dbReference type="GO" id="GO:0008270">
    <property type="term" value="F:zinc ion binding"/>
    <property type="evidence" value="ECO:0007669"/>
    <property type="project" value="UniProtKB-KW"/>
</dbReference>
<dbReference type="GO" id="GO:0051028">
    <property type="term" value="P:mRNA transport"/>
    <property type="evidence" value="ECO:0007669"/>
    <property type="project" value="UniProtKB-KW"/>
</dbReference>
<dbReference type="GO" id="GO:0051292">
    <property type="term" value="P:nuclear pore complex assembly"/>
    <property type="evidence" value="ECO:0000315"/>
    <property type="project" value="CACAO"/>
</dbReference>
<dbReference type="GO" id="GO:0006606">
    <property type="term" value="P:protein import into nucleus"/>
    <property type="evidence" value="ECO:0000318"/>
    <property type="project" value="GO_Central"/>
</dbReference>
<dbReference type="GO" id="GO:0006405">
    <property type="term" value="P:RNA export from nucleus"/>
    <property type="evidence" value="ECO:0000318"/>
    <property type="project" value="GO_Central"/>
</dbReference>
<dbReference type="FunFam" id="4.10.1060.10:FF:000001">
    <property type="entry name" value="Nuclear pore complex protein Nup153"/>
    <property type="match status" value="4"/>
</dbReference>
<dbReference type="Gene3D" id="4.10.1060.10">
    <property type="entry name" value="Zinc finger, RanBP2-type"/>
    <property type="match status" value="5"/>
</dbReference>
<dbReference type="InterPro" id="IPR026054">
    <property type="entry name" value="Nucleoporin"/>
</dbReference>
<dbReference type="InterPro" id="IPR013913">
    <property type="entry name" value="Nup153_N"/>
</dbReference>
<dbReference type="InterPro" id="IPR001876">
    <property type="entry name" value="Znf_RanBP2"/>
</dbReference>
<dbReference type="InterPro" id="IPR036443">
    <property type="entry name" value="Znf_RanBP2_sf"/>
</dbReference>
<dbReference type="PANTHER" id="PTHR23193">
    <property type="entry name" value="NUCLEAR PORE COMPLEX PROTEIN NUP"/>
    <property type="match status" value="1"/>
</dbReference>
<dbReference type="PANTHER" id="PTHR23193:SF23">
    <property type="entry name" value="NUCLEAR PORE COMPLEX PROTEIN NUP153"/>
    <property type="match status" value="1"/>
</dbReference>
<dbReference type="Pfam" id="PF08604">
    <property type="entry name" value="Nup153"/>
    <property type="match status" value="1"/>
</dbReference>
<dbReference type="Pfam" id="PF00641">
    <property type="entry name" value="Zn_ribbon_RanBP"/>
    <property type="match status" value="5"/>
</dbReference>
<dbReference type="SMART" id="SM00547">
    <property type="entry name" value="ZnF_RBZ"/>
    <property type="match status" value="5"/>
</dbReference>
<dbReference type="SUPFAM" id="SSF90209">
    <property type="entry name" value="Ran binding protein zinc finger-like"/>
    <property type="match status" value="4"/>
</dbReference>
<dbReference type="PROSITE" id="PS01358">
    <property type="entry name" value="ZF_RANBP2_1"/>
    <property type="match status" value="5"/>
</dbReference>
<dbReference type="PROSITE" id="PS50199">
    <property type="entry name" value="ZF_RANBP2_2"/>
    <property type="match status" value="5"/>
</dbReference>
<name>NU153_XENLA</name>
<organism>
    <name type="scientific">Xenopus laevis</name>
    <name type="common">African clawed frog</name>
    <dbReference type="NCBI Taxonomy" id="8355"/>
    <lineage>
        <taxon>Eukaryota</taxon>
        <taxon>Metazoa</taxon>
        <taxon>Chordata</taxon>
        <taxon>Craniata</taxon>
        <taxon>Vertebrata</taxon>
        <taxon>Euteleostomi</taxon>
        <taxon>Amphibia</taxon>
        <taxon>Batrachia</taxon>
        <taxon>Anura</taxon>
        <taxon>Pipoidea</taxon>
        <taxon>Pipidae</taxon>
        <taxon>Xenopodinae</taxon>
        <taxon>Xenopus</taxon>
        <taxon>Xenopus</taxon>
    </lineage>
</organism>